<evidence type="ECO:0000255" key="1">
    <source>
        <dbReference type="PROSITE-ProRule" id="PRU00238"/>
    </source>
</evidence>
<evidence type="ECO:0000269" key="2">
    <source>
    </source>
</evidence>
<dbReference type="EMBL" id="L19191">
    <property type="status" value="NOT_ANNOTATED_CDS"/>
    <property type="molecule type" value="mRNA"/>
</dbReference>
<dbReference type="PIR" id="B49296">
    <property type="entry name" value="B49296"/>
</dbReference>
<dbReference type="SMR" id="P55267"/>
<dbReference type="iPTMnet" id="P55267"/>
<dbReference type="OrthoDB" id="8751793at2759"/>
<dbReference type="GO" id="GO:0072562">
    <property type="term" value="C:blood microparticle"/>
    <property type="evidence" value="ECO:0007669"/>
    <property type="project" value="TreeGrafter"/>
</dbReference>
<dbReference type="GO" id="GO:0031838">
    <property type="term" value="C:haptoglobin-hemoglobin complex"/>
    <property type="evidence" value="ECO:0007669"/>
    <property type="project" value="TreeGrafter"/>
</dbReference>
<dbReference type="GO" id="GO:0005833">
    <property type="term" value="C:hemoglobin complex"/>
    <property type="evidence" value="ECO:0007669"/>
    <property type="project" value="InterPro"/>
</dbReference>
<dbReference type="GO" id="GO:0031720">
    <property type="term" value="F:haptoglobin binding"/>
    <property type="evidence" value="ECO:0007669"/>
    <property type="project" value="TreeGrafter"/>
</dbReference>
<dbReference type="GO" id="GO:0020037">
    <property type="term" value="F:heme binding"/>
    <property type="evidence" value="ECO:0007669"/>
    <property type="project" value="InterPro"/>
</dbReference>
<dbReference type="GO" id="GO:0046872">
    <property type="term" value="F:metal ion binding"/>
    <property type="evidence" value="ECO:0007669"/>
    <property type="project" value="UniProtKB-KW"/>
</dbReference>
<dbReference type="GO" id="GO:0043177">
    <property type="term" value="F:organic acid binding"/>
    <property type="evidence" value="ECO:0007669"/>
    <property type="project" value="TreeGrafter"/>
</dbReference>
<dbReference type="GO" id="GO:0019825">
    <property type="term" value="F:oxygen binding"/>
    <property type="evidence" value="ECO:0007669"/>
    <property type="project" value="InterPro"/>
</dbReference>
<dbReference type="GO" id="GO:0005344">
    <property type="term" value="F:oxygen carrier activity"/>
    <property type="evidence" value="ECO:0007669"/>
    <property type="project" value="UniProtKB-KW"/>
</dbReference>
<dbReference type="GO" id="GO:0004601">
    <property type="term" value="F:peroxidase activity"/>
    <property type="evidence" value="ECO:0007669"/>
    <property type="project" value="TreeGrafter"/>
</dbReference>
<dbReference type="GO" id="GO:0042744">
    <property type="term" value="P:hydrogen peroxide catabolic process"/>
    <property type="evidence" value="ECO:0007669"/>
    <property type="project" value="TreeGrafter"/>
</dbReference>
<dbReference type="CDD" id="cd08927">
    <property type="entry name" value="Hb-alpha-like"/>
    <property type="match status" value="1"/>
</dbReference>
<dbReference type="FunFam" id="1.10.490.10:FF:000002">
    <property type="entry name" value="Hemoglobin subunit alpha"/>
    <property type="match status" value="1"/>
</dbReference>
<dbReference type="Gene3D" id="1.10.490.10">
    <property type="entry name" value="Globins"/>
    <property type="match status" value="1"/>
</dbReference>
<dbReference type="InterPro" id="IPR000971">
    <property type="entry name" value="Globin"/>
</dbReference>
<dbReference type="InterPro" id="IPR009050">
    <property type="entry name" value="Globin-like_sf"/>
</dbReference>
<dbReference type="InterPro" id="IPR012292">
    <property type="entry name" value="Globin/Proto"/>
</dbReference>
<dbReference type="InterPro" id="IPR002338">
    <property type="entry name" value="Hemoglobin_a-typ"/>
</dbReference>
<dbReference type="InterPro" id="IPR050056">
    <property type="entry name" value="Hemoglobin_oxygen_transport"/>
</dbReference>
<dbReference type="PANTHER" id="PTHR11442">
    <property type="entry name" value="HEMOGLOBIN FAMILY MEMBER"/>
    <property type="match status" value="1"/>
</dbReference>
<dbReference type="PANTHER" id="PTHR11442:SF48">
    <property type="entry name" value="HEMOGLOBIN SUBUNIT ALPHA"/>
    <property type="match status" value="1"/>
</dbReference>
<dbReference type="Pfam" id="PF00042">
    <property type="entry name" value="Globin"/>
    <property type="match status" value="1"/>
</dbReference>
<dbReference type="PRINTS" id="PR00612">
    <property type="entry name" value="ALPHAHAEM"/>
</dbReference>
<dbReference type="SUPFAM" id="SSF46458">
    <property type="entry name" value="Globin-like"/>
    <property type="match status" value="1"/>
</dbReference>
<dbReference type="PROSITE" id="PS01033">
    <property type="entry name" value="GLOBIN"/>
    <property type="match status" value="1"/>
</dbReference>
<name>HBAC_AQUCT</name>
<organism>
    <name type="scientific">Aquarana catesbeiana</name>
    <name type="common">American bullfrog</name>
    <name type="synonym">Rana catesbeiana</name>
    <dbReference type="NCBI Taxonomy" id="8400"/>
    <lineage>
        <taxon>Eukaryota</taxon>
        <taxon>Metazoa</taxon>
        <taxon>Chordata</taxon>
        <taxon>Craniata</taxon>
        <taxon>Vertebrata</taxon>
        <taxon>Euteleostomi</taxon>
        <taxon>Amphibia</taxon>
        <taxon>Batrachia</taxon>
        <taxon>Anura</taxon>
        <taxon>Neobatrachia</taxon>
        <taxon>Ranoidea</taxon>
        <taxon>Ranidae</taxon>
        <taxon>Aquarana</taxon>
    </lineage>
</organism>
<sequence>MALNCDDKAHIRAIWPCLASHAEQYGAEALHRMFLCHPQTKTYFPNFDFHANSAHLKNHGKKVMNALTDAVKHLDHPEASLSSLSDLHAFTLRVDPGNFALLSNNILVVVAVHHSDKLSYETHQALDKFLNVVSGLLTSKYR</sequence>
<reference key="1">
    <citation type="journal article" date="1993" name="J. Biol. Chem.">
        <title>The hemoglobins of the bullfrog, Rana catesbeiana. The cDNA-derived amino acid sequences of the alpha chains of adult hemoglobins B and C: their roles in deoxygenation-induced aggregation.</title>
        <authorList>
            <person name="Smith D.J."/>
            <person name="Zhu H."/>
            <person name="Kolatkar P.R."/>
            <person name="Tam L.-T."/>
            <person name="Baldwin T.O."/>
            <person name="Roe B.A."/>
            <person name="Broyles R.H."/>
            <person name="Riggs A.F."/>
        </authorList>
    </citation>
    <scope>NUCLEOTIDE SEQUENCE [MRNA] OF 3-142</scope>
    <scope>PARTIAL PROTEIN SEQUENCE</scope>
    <scope>ACETYLATION AT ALA-2</scope>
    <source>
        <strain>Shaw</strain>
        <tissue>Erythroid cell</tissue>
    </source>
</reference>
<protein>
    <recommendedName>
        <fullName>Hemoglobin subunit alpha-C</fullName>
    </recommendedName>
    <alternativeName>
        <fullName>Alpha-C-globin</fullName>
    </alternativeName>
    <alternativeName>
        <fullName>Hemoglobin alpha-C chain</fullName>
    </alternativeName>
</protein>
<keyword id="KW-0007">Acetylation</keyword>
<keyword id="KW-0903">Direct protein sequencing</keyword>
<keyword id="KW-0349">Heme</keyword>
<keyword id="KW-0408">Iron</keyword>
<keyword id="KW-0479">Metal-binding</keyword>
<keyword id="KW-0561">Oxygen transport</keyword>
<keyword id="KW-0813">Transport</keyword>
<accession>P55267</accession>
<proteinExistence type="evidence at protein level"/>
<comment type="function">
    <text>The alpha-C chain is a component of adult hemoglobin C.</text>
</comment>
<comment type="subunit">
    <text>Heterotetramer of either two alpha-B chains or two alpha-C chains and two beta chains. The two major hemoglobins, B and C, associate upon deoxygenation to form a trimer of tetramers, BC2, that has a much lower affinity for oxygen than either component alone.</text>
</comment>
<comment type="tissue specificity">
    <text>Red blood cells.</text>
</comment>
<comment type="similarity">
    <text evidence="1">Belongs to the globin family.</text>
</comment>
<feature type="initiator methionine" description="Removed" evidence="2">
    <location>
        <position position="1"/>
    </location>
</feature>
<feature type="chain" id="PRO_0000052748" description="Hemoglobin subunit alpha-C">
    <location>
        <begin position="2"/>
        <end position="142"/>
    </location>
</feature>
<feature type="domain" description="Globin" evidence="1">
    <location>
        <begin position="2"/>
        <end position="142"/>
    </location>
</feature>
<feature type="binding site" evidence="1">
    <location>
        <position position="59"/>
    </location>
    <ligand>
        <name>O2</name>
        <dbReference type="ChEBI" id="CHEBI:15379"/>
    </ligand>
</feature>
<feature type="binding site" description="proximal binding residue" evidence="1">
    <location>
        <position position="88"/>
    </location>
    <ligand>
        <name>heme b</name>
        <dbReference type="ChEBI" id="CHEBI:60344"/>
    </ligand>
    <ligandPart>
        <name>Fe</name>
        <dbReference type="ChEBI" id="CHEBI:18248"/>
    </ligandPart>
</feature>
<feature type="modified residue" description="N-acetylalanine" evidence="2">
    <location>
        <position position="2"/>
    </location>
</feature>